<dbReference type="EMBL" id="AP009240">
    <property type="protein sequence ID" value="BAG80039.1"/>
    <property type="molecule type" value="Genomic_DNA"/>
</dbReference>
<dbReference type="RefSeq" id="WP_000331456.1">
    <property type="nucleotide sequence ID" value="NC_011415.1"/>
</dbReference>
<dbReference type="SMR" id="B6I2C2"/>
<dbReference type="GeneID" id="93777612"/>
<dbReference type="KEGG" id="ecy:ECSE_4515"/>
<dbReference type="HOGENOM" id="CLU_076075_2_0_6"/>
<dbReference type="Proteomes" id="UP000008199">
    <property type="component" value="Chromosome"/>
</dbReference>
<dbReference type="GO" id="GO:0005737">
    <property type="term" value="C:cytoplasm"/>
    <property type="evidence" value="ECO:0007669"/>
    <property type="project" value="UniProtKB-SubCell"/>
</dbReference>
<dbReference type="GO" id="GO:0046872">
    <property type="term" value="F:metal ion binding"/>
    <property type="evidence" value="ECO:0007669"/>
    <property type="project" value="UniProtKB-KW"/>
</dbReference>
<dbReference type="GO" id="GO:0030091">
    <property type="term" value="P:protein repair"/>
    <property type="evidence" value="ECO:0007669"/>
    <property type="project" value="UniProtKB-UniRule"/>
</dbReference>
<dbReference type="GO" id="GO:0051409">
    <property type="term" value="P:response to nitrosative stress"/>
    <property type="evidence" value="ECO:0007669"/>
    <property type="project" value="UniProtKB-UniRule"/>
</dbReference>
<dbReference type="GO" id="GO:0006979">
    <property type="term" value="P:response to oxidative stress"/>
    <property type="evidence" value="ECO:0007669"/>
    <property type="project" value="UniProtKB-UniRule"/>
</dbReference>
<dbReference type="CDD" id="cd12108">
    <property type="entry name" value="Hr-like"/>
    <property type="match status" value="1"/>
</dbReference>
<dbReference type="FunFam" id="1.20.120.520:FF:000001">
    <property type="entry name" value="Iron-sulfur cluster repair protein YtfE"/>
    <property type="match status" value="1"/>
</dbReference>
<dbReference type="Gene3D" id="1.20.120.520">
    <property type="entry name" value="nmb1532 protein domain like"/>
    <property type="match status" value="1"/>
</dbReference>
<dbReference type="HAMAP" id="MF_01606">
    <property type="entry name" value="RIC_YtfE"/>
    <property type="match status" value="1"/>
</dbReference>
<dbReference type="InterPro" id="IPR023742">
    <property type="entry name" value="FeS-repair_YftE"/>
</dbReference>
<dbReference type="InterPro" id="IPR012312">
    <property type="entry name" value="Hemerythrin-like"/>
</dbReference>
<dbReference type="InterPro" id="IPR019903">
    <property type="entry name" value="RIC_family"/>
</dbReference>
<dbReference type="NCBIfam" id="TIGR03652">
    <property type="entry name" value="FeS_repair_RIC"/>
    <property type="match status" value="1"/>
</dbReference>
<dbReference type="NCBIfam" id="NF008221">
    <property type="entry name" value="PRK10992.1"/>
    <property type="match status" value="1"/>
</dbReference>
<dbReference type="PANTHER" id="PTHR36438">
    <property type="entry name" value="IRON-SULFUR CLUSTER REPAIR PROTEIN YTFE"/>
    <property type="match status" value="1"/>
</dbReference>
<dbReference type="PANTHER" id="PTHR36438:SF1">
    <property type="entry name" value="IRON-SULFUR CLUSTER REPAIR PROTEIN YTFE"/>
    <property type="match status" value="1"/>
</dbReference>
<dbReference type="Pfam" id="PF01814">
    <property type="entry name" value="Hemerythrin"/>
    <property type="match status" value="1"/>
</dbReference>
<dbReference type="Pfam" id="PF04405">
    <property type="entry name" value="ScdA_N"/>
    <property type="match status" value="1"/>
</dbReference>
<sequence>MAYRDQPLGELALSIPRASALFRKYDMDYCCGGKQTLARAAARKELDVEVIEAELAKLAEQPIEKDWRSAPLAEIIDHIIVRYHDRHREQLPELILQATKVERVHADKPSVPKGLTKYLTMLHEELSSHMMKEEQILFPMIKQGMGSQAMGPISVMESEHDEAGELLEVIKHTTNNVTPPPEACTTWKAMYNGINELIDDLMDHISLENNVLFPRALAGE</sequence>
<organism>
    <name type="scientific">Escherichia coli (strain SE11)</name>
    <dbReference type="NCBI Taxonomy" id="409438"/>
    <lineage>
        <taxon>Bacteria</taxon>
        <taxon>Pseudomonadati</taxon>
        <taxon>Pseudomonadota</taxon>
        <taxon>Gammaproteobacteria</taxon>
        <taxon>Enterobacterales</taxon>
        <taxon>Enterobacteriaceae</taxon>
        <taxon>Escherichia</taxon>
    </lineage>
</organism>
<evidence type="ECO:0000255" key="1">
    <source>
        <dbReference type="HAMAP-Rule" id="MF_01606"/>
    </source>
</evidence>
<reference key="1">
    <citation type="journal article" date="2008" name="DNA Res.">
        <title>Complete genome sequence and comparative analysis of the wild-type commensal Escherichia coli strain SE11 isolated from a healthy adult.</title>
        <authorList>
            <person name="Oshima K."/>
            <person name="Toh H."/>
            <person name="Ogura Y."/>
            <person name="Sasamoto H."/>
            <person name="Morita H."/>
            <person name="Park S.-H."/>
            <person name="Ooka T."/>
            <person name="Iyoda S."/>
            <person name="Taylor T.D."/>
            <person name="Hayashi T."/>
            <person name="Itoh K."/>
            <person name="Hattori M."/>
        </authorList>
    </citation>
    <scope>NUCLEOTIDE SEQUENCE [LARGE SCALE GENOMIC DNA]</scope>
    <source>
        <strain>SE11</strain>
    </source>
</reference>
<comment type="function">
    <text evidence="1">Di-iron-containing protein involved in the repair of iron-sulfur clusters damaged by oxidative and nitrosative stress conditions.</text>
</comment>
<comment type="subunit">
    <text evidence="1">Homodimer.</text>
</comment>
<comment type="subcellular location">
    <subcellularLocation>
        <location evidence="1">Cytoplasm</location>
    </subcellularLocation>
</comment>
<comment type="similarity">
    <text evidence="1">Belongs to the RIC family. YtfE subfamily.</text>
</comment>
<gene>
    <name evidence="1" type="primary">ytfE</name>
    <name type="ordered locus">ECSE_4515</name>
</gene>
<keyword id="KW-0963">Cytoplasm</keyword>
<keyword id="KW-0408">Iron</keyword>
<keyword id="KW-0479">Metal-binding</keyword>
<keyword id="KW-0346">Stress response</keyword>
<protein>
    <recommendedName>
        <fullName evidence="1">Iron-sulfur cluster repair protein YtfE</fullName>
    </recommendedName>
</protein>
<proteinExistence type="inferred from homology"/>
<name>YTFE_ECOSE</name>
<accession>B6I2C2</accession>
<feature type="chain" id="PRO_1000148178" description="Iron-sulfur cluster repair protein YtfE">
    <location>
        <begin position="1"/>
        <end position="220"/>
    </location>
</feature>